<sequence length="471" mass="51014">MAVGHVIQVMGPVIDVRFEHGQLPALNNALTLDIERGEGNTTKLTLEVALHLGDDAVRTIAMSSTDGVQRGAQVTDTGAPISVPVGDATLGRVFNVLGEKIDLEPELDGTVRRDPIHRQAPKFEELSTKVEILETGIKVVDLLAPYIKGGKIGLFGGAGVGKTVLIQELINNIAQEHGGISVFAGVGERTREGNDLFHEMSDSGVIKKTAMVFGQMNEPPGARMRVALSGLTMAEYFRDEQGQDVLLFIDNIFRFTQAGSEVSALLGRMPSAVGYQPTLATEMGQLQERITSTNVGSVTSIQAVFVPADDYTDPAPATAFAHLDATTNLERKLTEMGIYPAVDPLASTSRALTPAVVGEEHYEVARQVQATLQKYRELQDIIAILGMDELSDEDKKTVSRARRIQFFLSQNFHVAEQFTGQKGSYVPVKQTVQDFKAILEGKYDHIPEDAFRLVGGIEAVLEQAKGMGVEV</sequence>
<reference key="1">
    <citation type="journal article" date="2009" name="J. Bacteriol.">
        <title>Complete genome sequence of Macrococcus caseolyticus strain JCSCS5402, reflecting the ancestral genome of the human-pathogenic staphylococci.</title>
        <authorList>
            <person name="Baba T."/>
            <person name="Kuwahara-Arai K."/>
            <person name="Uchiyama I."/>
            <person name="Takeuchi F."/>
            <person name="Ito T."/>
            <person name="Hiramatsu K."/>
        </authorList>
    </citation>
    <scope>NUCLEOTIDE SEQUENCE [LARGE SCALE GENOMIC DNA]</scope>
    <source>
        <strain>JCSC5402</strain>
    </source>
</reference>
<comment type="function">
    <text evidence="1">Produces ATP from ADP in the presence of a proton gradient across the membrane. The catalytic sites are hosted primarily by the beta subunits.</text>
</comment>
<comment type="catalytic activity">
    <reaction evidence="1">
        <text>ATP + H2O + 4 H(+)(in) = ADP + phosphate + 5 H(+)(out)</text>
        <dbReference type="Rhea" id="RHEA:57720"/>
        <dbReference type="ChEBI" id="CHEBI:15377"/>
        <dbReference type="ChEBI" id="CHEBI:15378"/>
        <dbReference type="ChEBI" id="CHEBI:30616"/>
        <dbReference type="ChEBI" id="CHEBI:43474"/>
        <dbReference type="ChEBI" id="CHEBI:456216"/>
        <dbReference type="EC" id="7.1.2.2"/>
    </reaction>
</comment>
<comment type="subunit">
    <text evidence="1">F-type ATPases have 2 components, CF(1) - the catalytic core - and CF(0) - the membrane proton channel. CF(1) has five subunits: alpha(3), beta(3), gamma(1), delta(1), epsilon(1). CF(0) has three main subunits: a(1), b(2) and c(9-12). The alpha and beta chains form an alternating ring which encloses part of the gamma chain. CF(1) is attached to CF(0) by a central stalk formed by the gamma and epsilon chains, while a peripheral stalk is formed by the delta and b chains.</text>
</comment>
<comment type="subcellular location">
    <subcellularLocation>
        <location evidence="1">Cell membrane</location>
        <topology evidence="1">Peripheral membrane protein</topology>
    </subcellularLocation>
</comment>
<comment type="similarity">
    <text evidence="1">Belongs to the ATPase alpha/beta chains family.</text>
</comment>
<keyword id="KW-0066">ATP synthesis</keyword>
<keyword id="KW-0067">ATP-binding</keyword>
<keyword id="KW-1003">Cell membrane</keyword>
<keyword id="KW-0139">CF(1)</keyword>
<keyword id="KW-0375">Hydrogen ion transport</keyword>
<keyword id="KW-0406">Ion transport</keyword>
<keyword id="KW-0472">Membrane</keyword>
<keyword id="KW-0547">Nucleotide-binding</keyword>
<keyword id="KW-1185">Reference proteome</keyword>
<keyword id="KW-1278">Translocase</keyword>
<keyword id="KW-0813">Transport</keyword>
<protein>
    <recommendedName>
        <fullName evidence="1">ATP synthase subunit beta</fullName>
        <ecNumber evidence="1">7.1.2.2</ecNumber>
    </recommendedName>
    <alternativeName>
        <fullName evidence="1">ATP synthase F1 sector subunit beta</fullName>
    </alternativeName>
    <alternativeName>
        <fullName evidence="1">F-ATPase subunit beta</fullName>
    </alternativeName>
</protein>
<dbReference type="EC" id="7.1.2.2" evidence="1"/>
<dbReference type="EMBL" id="AP009484">
    <property type="protein sequence ID" value="BAH18464.1"/>
    <property type="molecule type" value="Genomic_DNA"/>
</dbReference>
<dbReference type="RefSeq" id="WP_015912256.1">
    <property type="nucleotide sequence ID" value="NC_011999.1"/>
</dbReference>
<dbReference type="SMR" id="B9E8E6"/>
<dbReference type="STRING" id="458233.MCCL_1757"/>
<dbReference type="KEGG" id="mcl:MCCL_1757"/>
<dbReference type="eggNOG" id="COG0055">
    <property type="taxonomic scope" value="Bacteria"/>
</dbReference>
<dbReference type="HOGENOM" id="CLU_022398_0_2_9"/>
<dbReference type="OrthoDB" id="9801639at2"/>
<dbReference type="Proteomes" id="UP000001383">
    <property type="component" value="Chromosome"/>
</dbReference>
<dbReference type="GO" id="GO:0005886">
    <property type="term" value="C:plasma membrane"/>
    <property type="evidence" value="ECO:0007669"/>
    <property type="project" value="UniProtKB-SubCell"/>
</dbReference>
<dbReference type="GO" id="GO:0045259">
    <property type="term" value="C:proton-transporting ATP synthase complex"/>
    <property type="evidence" value="ECO:0007669"/>
    <property type="project" value="UniProtKB-KW"/>
</dbReference>
<dbReference type="GO" id="GO:0005524">
    <property type="term" value="F:ATP binding"/>
    <property type="evidence" value="ECO:0007669"/>
    <property type="project" value="UniProtKB-UniRule"/>
</dbReference>
<dbReference type="GO" id="GO:0016887">
    <property type="term" value="F:ATP hydrolysis activity"/>
    <property type="evidence" value="ECO:0007669"/>
    <property type="project" value="InterPro"/>
</dbReference>
<dbReference type="GO" id="GO:0046933">
    <property type="term" value="F:proton-transporting ATP synthase activity, rotational mechanism"/>
    <property type="evidence" value="ECO:0007669"/>
    <property type="project" value="UniProtKB-UniRule"/>
</dbReference>
<dbReference type="CDD" id="cd18110">
    <property type="entry name" value="ATP-synt_F1_beta_C"/>
    <property type="match status" value="1"/>
</dbReference>
<dbReference type="CDD" id="cd18115">
    <property type="entry name" value="ATP-synt_F1_beta_N"/>
    <property type="match status" value="1"/>
</dbReference>
<dbReference type="CDD" id="cd01133">
    <property type="entry name" value="F1-ATPase_beta_CD"/>
    <property type="match status" value="1"/>
</dbReference>
<dbReference type="FunFam" id="1.10.1140.10:FF:000001">
    <property type="entry name" value="ATP synthase subunit beta"/>
    <property type="match status" value="1"/>
</dbReference>
<dbReference type="FunFam" id="2.40.10.170:FF:000005">
    <property type="entry name" value="ATP synthase subunit beta"/>
    <property type="match status" value="1"/>
</dbReference>
<dbReference type="FunFam" id="3.40.50.300:FF:000004">
    <property type="entry name" value="ATP synthase subunit beta"/>
    <property type="match status" value="1"/>
</dbReference>
<dbReference type="Gene3D" id="2.40.10.170">
    <property type="match status" value="1"/>
</dbReference>
<dbReference type="Gene3D" id="1.10.1140.10">
    <property type="entry name" value="Bovine Mitochondrial F1-atpase, Atp Synthase Beta Chain, Chain D, domain 3"/>
    <property type="match status" value="1"/>
</dbReference>
<dbReference type="Gene3D" id="3.40.50.300">
    <property type="entry name" value="P-loop containing nucleotide triphosphate hydrolases"/>
    <property type="match status" value="1"/>
</dbReference>
<dbReference type="HAMAP" id="MF_01347">
    <property type="entry name" value="ATP_synth_beta_bact"/>
    <property type="match status" value="1"/>
</dbReference>
<dbReference type="InterPro" id="IPR003593">
    <property type="entry name" value="AAA+_ATPase"/>
</dbReference>
<dbReference type="InterPro" id="IPR055190">
    <property type="entry name" value="ATP-synt_VA_C"/>
</dbReference>
<dbReference type="InterPro" id="IPR005722">
    <property type="entry name" value="ATP_synth_F1_bsu"/>
</dbReference>
<dbReference type="InterPro" id="IPR020003">
    <property type="entry name" value="ATPase_a/bsu_AS"/>
</dbReference>
<dbReference type="InterPro" id="IPR050053">
    <property type="entry name" value="ATPase_alpha/beta_chains"/>
</dbReference>
<dbReference type="InterPro" id="IPR004100">
    <property type="entry name" value="ATPase_F1/V1/A1_a/bsu_N"/>
</dbReference>
<dbReference type="InterPro" id="IPR036121">
    <property type="entry name" value="ATPase_F1/V1/A1_a/bsu_N_sf"/>
</dbReference>
<dbReference type="InterPro" id="IPR000194">
    <property type="entry name" value="ATPase_F1/V1/A1_a/bsu_nucl-bd"/>
</dbReference>
<dbReference type="InterPro" id="IPR024034">
    <property type="entry name" value="ATPase_F1/V1_b/a_C"/>
</dbReference>
<dbReference type="InterPro" id="IPR027417">
    <property type="entry name" value="P-loop_NTPase"/>
</dbReference>
<dbReference type="NCBIfam" id="TIGR01039">
    <property type="entry name" value="atpD"/>
    <property type="match status" value="1"/>
</dbReference>
<dbReference type="PANTHER" id="PTHR15184">
    <property type="entry name" value="ATP SYNTHASE"/>
    <property type="match status" value="1"/>
</dbReference>
<dbReference type="PANTHER" id="PTHR15184:SF71">
    <property type="entry name" value="ATP SYNTHASE SUBUNIT BETA, MITOCHONDRIAL"/>
    <property type="match status" value="1"/>
</dbReference>
<dbReference type="Pfam" id="PF00006">
    <property type="entry name" value="ATP-synt_ab"/>
    <property type="match status" value="1"/>
</dbReference>
<dbReference type="Pfam" id="PF02874">
    <property type="entry name" value="ATP-synt_ab_N"/>
    <property type="match status" value="1"/>
</dbReference>
<dbReference type="Pfam" id="PF22919">
    <property type="entry name" value="ATP-synt_VA_C"/>
    <property type="match status" value="1"/>
</dbReference>
<dbReference type="SMART" id="SM00382">
    <property type="entry name" value="AAA"/>
    <property type="match status" value="1"/>
</dbReference>
<dbReference type="SUPFAM" id="SSF47917">
    <property type="entry name" value="C-terminal domain of alpha and beta subunits of F1 ATP synthase"/>
    <property type="match status" value="1"/>
</dbReference>
<dbReference type="SUPFAM" id="SSF50615">
    <property type="entry name" value="N-terminal domain of alpha and beta subunits of F1 ATP synthase"/>
    <property type="match status" value="1"/>
</dbReference>
<dbReference type="SUPFAM" id="SSF52540">
    <property type="entry name" value="P-loop containing nucleoside triphosphate hydrolases"/>
    <property type="match status" value="1"/>
</dbReference>
<dbReference type="PROSITE" id="PS00152">
    <property type="entry name" value="ATPASE_ALPHA_BETA"/>
    <property type="match status" value="1"/>
</dbReference>
<organism>
    <name type="scientific">Macrococcus caseolyticus (strain JCSC5402)</name>
    <name type="common">Macrococcoides caseolyticum</name>
    <dbReference type="NCBI Taxonomy" id="458233"/>
    <lineage>
        <taxon>Bacteria</taxon>
        <taxon>Bacillati</taxon>
        <taxon>Bacillota</taxon>
        <taxon>Bacilli</taxon>
        <taxon>Bacillales</taxon>
        <taxon>Staphylococcaceae</taxon>
        <taxon>Macrococcoides</taxon>
    </lineage>
</organism>
<proteinExistence type="inferred from homology"/>
<feature type="chain" id="PRO_1000166596" description="ATP synthase subunit beta">
    <location>
        <begin position="1"/>
        <end position="471"/>
    </location>
</feature>
<feature type="binding site" evidence="1">
    <location>
        <begin position="156"/>
        <end position="163"/>
    </location>
    <ligand>
        <name>ATP</name>
        <dbReference type="ChEBI" id="CHEBI:30616"/>
    </ligand>
</feature>
<evidence type="ECO:0000255" key="1">
    <source>
        <dbReference type="HAMAP-Rule" id="MF_01347"/>
    </source>
</evidence>
<name>ATPB_MACCJ</name>
<gene>
    <name evidence="1" type="primary">atpD</name>
    <name type="ordered locus">MCCL_1757</name>
</gene>
<accession>B9E8E6</accession>